<sequence length="850" mass="97988">MSNNPPYMTNGIQAAVVEWIRALDLEIISLLLSRAWPLALLTTTELRWRPTVLTDTDNVVRLDRRQRLVRWDRRPPNEIFLEGFVPIVTREDPDWEETDLYGFAKNNHPSIFVSTTKTQRNKKKYVWTPRNANRGIVYQYEIYAPGGVDVNDSFSDASPWPNQMEVAFPGGIQNIYIRSARELHNGRVQRIWINPNFLDPGDLEPIVSSSRTLQVIWRVNHPDGGNKDGRSERSTSSYDDLMYGGTGNVQEDTFGDESNNPKPIADGEFMIESIKDKNSFLDLSKNVNGGIIHSNVYSGGDNQIWVFSYDDNKKAYKIKSYQNSSLYLSWDSNASSKEIILRGYTNSGSNNQYWQIEQTGKNYRLRNLLNLNMIITAQDKSSAFGGKEVIVNTEISNSNTKSSQEWNIIPFDFRPIMDGDYNIFNLDLPNQVVDFSNQPDLLVHGHEFCDNENQTWHFTYNSTYHAYKIWSGRKSNLLLTWDSNATSKEMVVRAYTESRSKNQYWRIEQTGSKSYKLRNLENSNMILGLTNVSTSYGGLNLMVQDDSNGNSNLHSDWDIKPIIYQYVPDGDYNIFNDNFPNIAVDYTNQEGALVHGHNFCSNNNQKWSFVYDGKKKAYKIKSGVNSKLWLTWDSNASSKEMVLRAYTESGNWNQYWRLYQANDGSYIIRNLKEFKMLIALTNIDTPYGGKQLIVTDTKESGNHWYLKKLGEVPLPNRKFRIATKLNYKKVIDSSTAYNLIITHDLNFASSIWELVYDSNKKAYNIYSADINNLGWVYQNKNFFVKLDNIDGPDHGDLRYFWTIEYSMQTGCYLIRSLYDPAHAVGYTDKDSVITDTSTYSDNQLFHFILM</sequence>
<organism evidence="6">
    <name type="scientific">Pieris brassicae</name>
    <name type="common">White butterfly</name>
    <name type="synonym">Large white butterfly</name>
    <dbReference type="NCBI Taxonomy" id="7116"/>
    <lineage>
        <taxon>Eukaryota</taxon>
        <taxon>Metazoa</taxon>
        <taxon>Ecdysozoa</taxon>
        <taxon>Arthropoda</taxon>
        <taxon>Hexapoda</taxon>
        <taxon>Insecta</taxon>
        <taxon>Pterygota</taxon>
        <taxon>Neoptera</taxon>
        <taxon>Endopterygota</taxon>
        <taxon>Lepidoptera</taxon>
        <taxon>Glossata</taxon>
        <taxon>Ditrysia</taxon>
        <taxon>Papilionoidea</taxon>
        <taxon>Pieridae</taxon>
        <taxon>Pierinae</taxon>
        <taxon>Pieris</taxon>
    </lineage>
</organism>
<feature type="chain" id="PRO_0000097051" description="Pierisin">
    <location>
        <begin position="1"/>
        <end position="850"/>
    </location>
</feature>
<feature type="domain" description="Ricin B-type lectin 1" evidence="2">
    <location>
        <begin position="267"/>
        <end position="409"/>
    </location>
</feature>
<feature type="domain" description="Ricin B-type lectin 2" evidence="2">
    <location>
        <begin position="413"/>
        <end position="560"/>
    </location>
</feature>
<feature type="domain" description="Ricin B-type lectin 3" evidence="2">
    <location>
        <begin position="564"/>
        <end position="707"/>
    </location>
</feature>
<feature type="mutagenesis site" description="Reduced cytotoxic activity." evidence="3">
    <original>E</original>
    <variation>D</variation>
    <location>
        <position position="165"/>
    </location>
</feature>
<feature type="mutagenesis site" description="Complete loss of cytotoxic activity." evidence="3">
    <original>E</original>
    <variation>Q</variation>
    <location>
        <position position="165"/>
    </location>
</feature>
<name>PRSN_PIEBR</name>
<accession>Q9GV36</accession>
<evidence type="ECO:0000250" key="1">
    <source>
        <dbReference type="UniProtKB" id="Q9U8Q4"/>
    </source>
</evidence>
<evidence type="ECO:0000255" key="2">
    <source>
        <dbReference type="PROSITE-ProRule" id="PRU00174"/>
    </source>
</evidence>
<evidence type="ECO:0000269" key="3">
    <source>
    </source>
</evidence>
<evidence type="ECO:0000303" key="4">
    <source>
    </source>
</evidence>
<evidence type="ECO:0000305" key="5"/>
<evidence type="ECO:0000312" key="6">
    <source>
        <dbReference type="EMBL" id="BAB13774.1"/>
    </source>
</evidence>
<dbReference type="EC" id="2.4.2.-" evidence="1"/>
<dbReference type="EMBL" id="AB037676">
    <property type="protein sequence ID" value="BAB13774.1"/>
    <property type="molecule type" value="mRNA"/>
</dbReference>
<dbReference type="SMR" id="Q9GV36"/>
<dbReference type="CAZy" id="CBM13">
    <property type="family name" value="Carbohydrate-Binding Module Family 13"/>
</dbReference>
<dbReference type="GO" id="GO:0030591">
    <property type="term" value="F:2'-deoxyguanosine DNA ADP-ribosyltransferase activity"/>
    <property type="evidence" value="ECO:0000250"/>
    <property type="project" value="UniProtKB"/>
</dbReference>
<dbReference type="GO" id="GO:0016779">
    <property type="term" value="F:nucleotidyltransferase activity"/>
    <property type="evidence" value="ECO:0007669"/>
    <property type="project" value="UniProtKB-KW"/>
</dbReference>
<dbReference type="GO" id="GO:0006915">
    <property type="term" value="P:apoptotic process"/>
    <property type="evidence" value="ECO:0000314"/>
    <property type="project" value="UniProtKB"/>
</dbReference>
<dbReference type="GO" id="GO:0030592">
    <property type="term" value="P:DNA ADP-ribosylation"/>
    <property type="evidence" value="ECO:0000250"/>
    <property type="project" value="UniProtKB"/>
</dbReference>
<dbReference type="CDD" id="cd23497">
    <property type="entry name" value="beta-trefoil_Ricin_MTX-like_rpt1-3"/>
    <property type="match status" value="3"/>
</dbReference>
<dbReference type="CDD" id="cd23498">
    <property type="entry name" value="beta-trefoil_Ricin_MTX-like_rpt4"/>
    <property type="match status" value="1"/>
</dbReference>
<dbReference type="FunFam" id="2.80.10.50:FF:000106">
    <property type="entry name" value="Pierisin"/>
    <property type="match status" value="2"/>
</dbReference>
<dbReference type="Gene3D" id="2.80.10.50">
    <property type="match status" value="4"/>
</dbReference>
<dbReference type="Gene3D" id="3.90.210.10">
    <property type="entry name" value="Heat-Labile Enterotoxin, subunit A"/>
    <property type="match status" value="1"/>
</dbReference>
<dbReference type="InterPro" id="IPR054695">
    <property type="entry name" value="Pierisin-like_dom"/>
</dbReference>
<dbReference type="InterPro" id="IPR035992">
    <property type="entry name" value="Ricin_B-like_lectins"/>
</dbReference>
<dbReference type="InterPro" id="IPR000772">
    <property type="entry name" value="Ricin_B_lectin"/>
</dbReference>
<dbReference type="Pfam" id="PF14200">
    <property type="entry name" value="RicinB_lectin_2"/>
    <property type="match status" value="3"/>
</dbReference>
<dbReference type="Pfam" id="PF22596">
    <property type="entry name" value="Scabin-like"/>
    <property type="match status" value="1"/>
</dbReference>
<dbReference type="SMART" id="SM00458">
    <property type="entry name" value="RICIN"/>
    <property type="match status" value="3"/>
</dbReference>
<dbReference type="SUPFAM" id="SSF56399">
    <property type="entry name" value="ADP-ribosylation"/>
    <property type="match status" value="1"/>
</dbReference>
<dbReference type="SUPFAM" id="SSF50370">
    <property type="entry name" value="Ricin B-like lectins"/>
    <property type="match status" value="4"/>
</dbReference>
<dbReference type="PROSITE" id="PS50231">
    <property type="entry name" value="RICIN_B_LECTIN"/>
    <property type="match status" value="3"/>
</dbReference>
<reference evidence="5" key="1">
    <citation type="journal article" date="2000" name="Eur. J. Biochem.">
        <title>Purification and cloning of pierisin-2, an apoptosis-inducing protein from the cabbage butterfly, Pieris brassicae.</title>
        <authorList>
            <person name="Matsushima-Hibiya Y."/>
            <person name="Watanabe M."/>
            <person name="Kono T."/>
            <person name="Kanazawa T."/>
            <person name="Koyama K."/>
            <person name="Sugimura T."/>
            <person name="Wakabayashi K."/>
        </authorList>
    </citation>
    <scope>NUCLEOTIDE SEQUENCE [MRNA]</scope>
    <scope>PROTEIN SEQUENCE OF 125-134; 228-272; 278-282; 517-526; 561-570; 786-795 AND 830-841</scope>
    <scope>FUNCTION</scope>
    <scope>MUTAGENESIS OF GLU-165</scope>
    <source>
        <tissue>Fifth instar larvae</tissue>
        <tissue>Pupae</tissue>
    </source>
</reference>
<comment type="function">
    <text evidence="1 3">ADP-ribosylates double-stranded DNA by targeting the N2 amino group of dG residues. Induces apoptosis in a range of human cell lines (By similarity) (PubMed:10971585). May play a role in destroying cells during pupation and/or defense against parasites (By similarity).</text>
</comment>
<comment type="catalytic activity">
    <reaction evidence="1">
        <text>a 2'-deoxyguanosine in DNA + NAD(+) = an N(2)-(ADP-L-ribosyl)-2'-deoxyguanosine in DNA + nicotinamide + H(+)</text>
        <dbReference type="Rhea" id="RHEA:71807"/>
        <dbReference type="Rhea" id="RHEA-COMP:11367"/>
        <dbReference type="Rhea" id="RHEA-COMP:18062"/>
        <dbReference type="ChEBI" id="CHEBI:15378"/>
        <dbReference type="ChEBI" id="CHEBI:17154"/>
        <dbReference type="ChEBI" id="CHEBI:57540"/>
        <dbReference type="ChEBI" id="CHEBI:85445"/>
        <dbReference type="ChEBI" id="CHEBI:142722"/>
    </reaction>
</comment>
<comment type="similarity">
    <text evidence="5">Belongs to the pierisin ADP-ribosyltransferase family.</text>
</comment>
<keyword id="KW-0053">Apoptosis</keyword>
<keyword id="KW-0903">Direct protein sequencing</keyword>
<keyword id="KW-0328">Glycosyltransferase</keyword>
<keyword id="KW-0520">NAD</keyword>
<keyword id="KW-0548">Nucleotidyltransferase</keyword>
<keyword id="KW-0677">Repeat</keyword>
<keyword id="KW-0808">Transferase</keyword>
<protein>
    <recommendedName>
        <fullName evidence="4">Pierisin</fullName>
        <ecNumber evidence="1">2.4.2.-</ecNumber>
    </recommendedName>
    <alternativeName>
        <fullName>NAD--DNA ADP-ribosyltransferase</fullName>
    </alternativeName>
    <alternativeName>
        <fullName evidence="4">Pierisin-2</fullName>
    </alternativeName>
    <alternativeName>
        <fullName>Pierisin-B</fullName>
    </alternativeName>
</protein>
<proteinExistence type="evidence at protein level"/>